<feature type="chain" id="PRO_0000438301" description="ESAT-6-like protein EsxA">
    <location>
        <begin position="1"/>
        <end position="97"/>
    </location>
</feature>
<feature type="helix" evidence="7">
    <location>
        <begin position="2"/>
        <end position="38"/>
    </location>
</feature>
<feature type="helix" evidence="7">
    <location>
        <begin position="39"/>
        <end position="43"/>
    </location>
</feature>
<feature type="helix" evidence="7">
    <location>
        <begin position="46"/>
        <end position="80"/>
    </location>
</feature>
<organism>
    <name type="scientific">Thermomonospora curvata (strain ATCC 19995 / DSM 43183 / JCM 3096 / KCTC 9072 / NBRC 15933 / NCIMB 10081 / Henssen B9)</name>
    <dbReference type="NCBI Taxonomy" id="471852"/>
    <lineage>
        <taxon>Bacteria</taxon>
        <taxon>Bacillati</taxon>
        <taxon>Actinomycetota</taxon>
        <taxon>Actinomycetes</taxon>
        <taxon>Streptosporangiales</taxon>
        <taxon>Thermomonosporaceae</taxon>
        <taxon>Thermomonospora</taxon>
    </lineage>
</organism>
<protein>
    <recommendedName>
        <fullName evidence="3">ESAT-6-like protein EsxA</fullName>
    </recommendedName>
</protein>
<keyword id="KW-0002">3D-structure</keyword>
<keyword id="KW-1185">Reference proteome</keyword>
<keyword id="KW-0964">Secreted</keyword>
<evidence type="ECO:0000250" key="1">
    <source>
        <dbReference type="UniProtKB" id="P9WNK7"/>
    </source>
</evidence>
<evidence type="ECO:0000269" key="2">
    <source>
    </source>
</evidence>
<evidence type="ECO:0000303" key="3">
    <source>
    </source>
</evidence>
<evidence type="ECO:0000305" key="4"/>
<evidence type="ECO:0000305" key="5">
    <source>
    </source>
</evidence>
<evidence type="ECO:0007744" key="6">
    <source>
        <dbReference type="PDB" id="4LWS"/>
    </source>
</evidence>
<evidence type="ECO:0007829" key="7">
    <source>
        <dbReference type="PDB" id="4LWS"/>
    </source>
</evidence>
<sequence length="97" mass="10830">MSDYTRANFGGLSEGEAQFSMTARALLDELTDLEGKLRAKLDRWDGDAQAAYWNYQKEWDAAAKDMQNVVAQLGVAIREAHDNYQAAERANTSIWAG</sequence>
<reference key="1">
    <citation type="journal article" date="2011" name="Stand. Genomic Sci.">
        <title>Complete genome sequence of Thermomonospora curvata type strain (B9).</title>
        <authorList>
            <person name="Chertkov O."/>
            <person name="Sikorski J."/>
            <person name="Nolan M."/>
            <person name="Lapidus A."/>
            <person name="Lucas S."/>
            <person name="Del Rio T.G."/>
            <person name="Tice H."/>
            <person name="Cheng J.F."/>
            <person name="Goodwin L."/>
            <person name="Pitluck S."/>
            <person name="Liolios K."/>
            <person name="Ivanova N."/>
            <person name="Mavromatis K."/>
            <person name="Mikhailova N."/>
            <person name="Ovchinnikova G."/>
            <person name="Pati A."/>
            <person name="Chen A."/>
            <person name="Palaniappan K."/>
            <person name="Djao O.D."/>
            <person name="Land M."/>
            <person name="Hauser L."/>
            <person name="Chang Y.J."/>
            <person name="Jeffries C.D."/>
            <person name="Brettin T."/>
            <person name="Han C."/>
            <person name="Detter J.C."/>
            <person name="Rohde M."/>
            <person name="Goeker M."/>
            <person name="Woyke T."/>
            <person name="Bristow J."/>
            <person name="Eisen J.A."/>
            <person name="Markowitz V."/>
            <person name="Hugenholtz P."/>
            <person name="Klenk H.P."/>
            <person name="Kyrpides N.C."/>
        </authorList>
    </citation>
    <scope>NUCLEOTIDE SEQUENCE [LARGE SCALE GENOMIC DNA]</scope>
    <source>
        <strain>ATCC 19995 / DSM 43183 / JCM 3096 / KCTC 9072 / NBRC 15933 / NCIMB 10081 / Henssen B9</strain>
    </source>
</reference>
<reference evidence="6" key="2">
    <citation type="journal article" date="2015" name="Cell">
        <title>Substrates control multimerization and activation of the multi-domain ATPase motor of type VII secretion.</title>
        <authorList>
            <person name="Rosenberg O.S."/>
            <person name="Dovala D."/>
            <person name="Li X."/>
            <person name="Connolly L."/>
            <person name="Bendebury A."/>
            <person name="Finer-Moore J."/>
            <person name="Holton J."/>
            <person name="Cheng Y."/>
            <person name="Stroud R.M."/>
            <person name="Cox J.S."/>
        </authorList>
    </citation>
    <scope>X-RAY CRYSTALLOGRAPHY (2.00 ANGSTROMS) OF 2-97 IN COMPLEX WITH ESXB</scope>
    <scope>INTERACTION WITH ESXB</scope>
    <source>
        <strain>ATCC 19995 / DSM 43183 / JCM 3096 / KCTC 9072 / NBRC 15933 / NCIMB 10081 / Henssen B9</strain>
    </source>
</reference>
<gene>
    <name evidence="3" type="primary">esxA</name>
    <name type="ordered locus">Tcur_0611</name>
</gene>
<dbReference type="EMBL" id="CP001738">
    <property type="protein sequence ID" value="ACY96206.1"/>
    <property type="molecule type" value="Genomic_DNA"/>
</dbReference>
<dbReference type="RefSeq" id="WP_012850990.1">
    <property type="nucleotide sequence ID" value="NC_013510.1"/>
</dbReference>
<dbReference type="PDB" id="4LWS">
    <property type="method" value="X-ray"/>
    <property type="resolution" value="2.00 A"/>
    <property type="chains" value="B=2-97"/>
</dbReference>
<dbReference type="PDBsum" id="4LWS"/>
<dbReference type="SMR" id="D1A4H1"/>
<dbReference type="STRING" id="471852.Tcur_0611"/>
<dbReference type="KEGG" id="tcu:Tcur_0611"/>
<dbReference type="eggNOG" id="COG4842">
    <property type="taxonomic scope" value="Bacteria"/>
</dbReference>
<dbReference type="HOGENOM" id="CLU_151185_3_2_11"/>
<dbReference type="OrthoDB" id="4278078at2"/>
<dbReference type="EvolutionaryTrace" id="D1A4H1"/>
<dbReference type="Proteomes" id="UP000001918">
    <property type="component" value="Chromosome"/>
</dbReference>
<dbReference type="GO" id="GO:0005576">
    <property type="term" value="C:extracellular region"/>
    <property type="evidence" value="ECO:0007669"/>
    <property type="project" value="UniProtKB-SubCell"/>
</dbReference>
<dbReference type="Gene3D" id="1.10.287.1060">
    <property type="entry name" value="ESAT-6-like"/>
    <property type="match status" value="1"/>
</dbReference>
<dbReference type="InterPro" id="IPR036689">
    <property type="entry name" value="ESAT-6-like_sf"/>
</dbReference>
<dbReference type="InterPro" id="IPR010310">
    <property type="entry name" value="T7SS_ESAT-6-like"/>
</dbReference>
<dbReference type="Pfam" id="PF06013">
    <property type="entry name" value="WXG100"/>
    <property type="match status" value="1"/>
</dbReference>
<dbReference type="SUPFAM" id="SSF140453">
    <property type="entry name" value="EsxAB dimer-like"/>
    <property type="match status" value="1"/>
</dbReference>
<comment type="function">
    <text evidence="2">May help regulate assembly and function of the type VII secretion system (T7SS) (PubMed:25865481). EsxA disassembles pre-formed EccC-EsxB multimers, possibly by making EccC-EsxA-EsxB trimers instead of EccC-EsxB-EsxB-EccC tetramers (PubMed:25865481).</text>
</comment>
<comment type="subunit">
    <text evidence="2">Forms a tight 1:1 complex with EsxB (PubMed:25865481). Forms a complex with EccC and EsxB, probably wholly mediated by EsxB (PubMed:25865481).</text>
</comment>
<comment type="subcellular location">
    <subcellularLocation>
        <location evidence="1">Secreted</location>
    </subcellularLocation>
    <text evidence="5">Probably secreted via the ESX / type VII secretion system (T7SS).</text>
</comment>
<comment type="similarity">
    <text evidence="4">Belongs to the WXG100 family. ESAT-6 subfamily.</text>
</comment>
<accession>D1A4H1</accession>
<proteinExistence type="evidence at protein level"/>
<name>ESXA_THECD</name>